<keyword id="KW-0963">Cytoplasm</keyword>
<keyword id="KW-0413">Isomerase</keyword>
<keyword id="KW-0627">Porphyrin biosynthesis</keyword>
<keyword id="KW-0663">Pyridoxal phosphate</keyword>
<protein>
    <recommendedName>
        <fullName evidence="1">Glutamate-1-semialdehyde 2,1-aminomutase</fullName>
        <shortName evidence="1">GSA</shortName>
        <ecNumber evidence="1">5.4.3.8</ecNumber>
    </recommendedName>
    <alternativeName>
        <fullName evidence="1">Glutamate-1-semialdehyde aminotransferase</fullName>
        <shortName evidence="1">GSA-AT</shortName>
    </alternativeName>
</protein>
<feature type="chain" id="PRO_0000300950" description="Glutamate-1-semialdehyde 2,1-aminomutase">
    <location>
        <begin position="1"/>
        <end position="430"/>
    </location>
</feature>
<feature type="modified residue" description="N6-(pyridoxal phosphate)lysine" evidence="1">
    <location>
        <position position="265"/>
    </location>
</feature>
<proteinExistence type="inferred from homology"/>
<sequence>MTRSEALFEQAKKTIPGGVNSPVRAFNGVGGSPLFIEKADGAYIYDADGKAYIDYVGSWGPMILGHNHPKIREAVLAAVHNGLSFGAPTELEVQMAEKVIAMVPSIEQVRMVSSGTEATMSAIRLARGFTNRDKILKFEGCYHGHADCLLVKAGSGALTLGQPSSPGIPEDFAKHTLTAVYNDLDSVRTLFEQYPTEIACIIIEPVAGNMNCIPPIPGFLKGLRTMCDEFGALLIIDEVMTGFRVSRSGAQGHYGVTPDLTTLGKVIGGGMPVGAFGGRKEVMQFIAPTGPVYQAGTLSGNPIAMSAGLAQMEALCEEGLYEALSAKTKRIAEGFKAAADKHGIPMAINYVGGMFGFFFTEQEQITRFDQVTKCNIEHFRTFYHGMLDEGVYLAPSAYEAGFLSMAHGEEELRLTLEAADRVLARMKAAM</sequence>
<reference key="1">
    <citation type="submission" date="2006-08" db="EMBL/GenBank/DDBJ databases">
        <title>Complete sequence of chromosome 1 of Shewanella sp. MR-7.</title>
        <authorList>
            <person name="Copeland A."/>
            <person name="Lucas S."/>
            <person name="Lapidus A."/>
            <person name="Barry K."/>
            <person name="Detter J.C."/>
            <person name="Glavina del Rio T."/>
            <person name="Hammon N."/>
            <person name="Israni S."/>
            <person name="Dalin E."/>
            <person name="Tice H."/>
            <person name="Pitluck S."/>
            <person name="Kiss H."/>
            <person name="Brettin T."/>
            <person name="Bruce D."/>
            <person name="Han C."/>
            <person name="Tapia R."/>
            <person name="Gilna P."/>
            <person name="Schmutz J."/>
            <person name="Larimer F."/>
            <person name="Land M."/>
            <person name="Hauser L."/>
            <person name="Kyrpides N."/>
            <person name="Mikhailova N."/>
            <person name="Nealson K."/>
            <person name="Konstantinidis K."/>
            <person name="Klappenbach J."/>
            <person name="Tiedje J."/>
            <person name="Richardson P."/>
        </authorList>
    </citation>
    <scope>NUCLEOTIDE SEQUENCE [LARGE SCALE GENOMIC DNA]</scope>
    <source>
        <strain>MR-7</strain>
    </source>
</reference>
<name>GSA_SHESR</name>
<gene>
    <name evidence="1" type="primary">hemL</name>
    <name type="ordered locus">Shewmr7_2975</name>
</gene>
<evidence type="ECO:0000255" key="1">
    <source>
        <dbReference type="HAMAP-Rule" id="MF_00375"/>
    </source>
</evidence>
<accession>Q0HSE6</accession>
<comment type="catalytic activity">
    <reaction evidence="1">
        <text>(S)-4-amino-5-oxopentanoate = 5-aminolevulinate</text>
        <dbReference type="Rhea" id="RHEA:14265"/>
        <dbReference type="ChEBI" id="CHEBI:57501"/>
        <dbReference type="ChEBI" id="CHEBI:356416"/>
        <dbReference type="EC" id="5.4.3.8"/>
    </reaction>
</comment>
<comment type="cofactor">
    <cofactor evidence="1">
        <name>pyridoxal 5'-phosphate</name>
        <dbReference type="ChEBI" id="CHEBI:597326"/>
    </cofactor>
</comment>
<comment type="pathway">
    <text evidence="1">Porphyrin-containing compound metabolism; protoporphyrin-IX biosynthesis; 5-aminolevulinate from L-glutamyl-tRNA(Glu): step 2/2.</text>
</comment>
<comment type="subunit">
    <text evidence="1">Homodimer.</text>
</comment>
<comment type="subcellular location">
    <subcellularLocation>
        <location evidence="1">Cytoplasm</location>
    </subcellularLocation>
</comment>
<comment type="similarity">
    <text evidence="1">Belongs to the class-III pyridoxal-phosphate-dependent aminotransferase family. HemL subfamily.</text>
</comment>
<dbReference type="EC" id="5.4.3.8" evidence="1"/>
<dbReference type="EMBL" id="CP000444">
    <property type="protein sequence ID" value="ABI43959.1"/>
    <property type="molecule type" value="Genomic_DNA"/>
</dbReference>
<dbReference type="SMR" id="Q0HSE6"/>
<dbReference type="KEGG" id="shm:Shewmr7_2975"/>
<dbReference type="HOGENOM" id="CLU_016922_1_5_6"/>
<dbReference type="UniPathway" id="UPA00251">
    <property type="reaction ID" value="UER00317"/>
</dbReference>
<dbReference type="GO" id="GO:0005737">
    <property type="term" value="C:cytoplasm"/>
    <property type="evidence" value="ECO:0007669"/>
    <property type="project" value="UniProtKB-SubCell"/>
</dbReference>
<dbReference type="GO" id="GO:0042286">
    <property type="term" value="F:glutamate-1-semialdehyde 2,1-aminomutase activity"/>
    <property type="evidence" value="ECO:0007669"/>
    <property type="project" value="UniProtKB-UniRule"/>
</dbReference>
<dbReference type="GO" id="GO:0030170">
    <property type="term" value="F:pyridoxal phosphate binding"/>
    <property type="evidence" value="ECO:0007669"/>
    <property type="project" value="InterPro"/>
</dbReference>
<dbReference type="GO" id="GO:0008483">
    <property type="term" value="F:transaminase activity"/>
    <property type="evidence" value="ECO:0007669"/>
    <property type="project" value="InterPro"/>
</dbReference>
<dbReference type="GO" id="GO:0006782">
    <property type="term" value="P:protoporphyrinogen IX biosynthetic process"/>
    <property type="evidence" value="ECO:0007669"/>
    <property type="project" value="UniProtKB-UniRule"/>
</dbReference>
<dbReference type="CDD" id="cd00610">
    <property type="entry name" value="OAT_like"/>
    <property type="match status" value="1"/>
</dbReference>
<dbReference type="FunFam" id="3.40.640.10:FF:000021">
    <property type="entry name" value="Glutamate-1-semialdehyde 2,1-aminomutase"/>
    <property type="match status" value="1"/>
</dbReference>
<dbReference type="Gene3D" id="3.90.1150.10">
    <property type="entry name" value="Aspartate Aminotransferase, domain 1"/>
    <property type="match status" value="1"/>
</dbReference>
<dbReference type="Gene3D" id="3.40.640.10">
    <property type="entry name" value="Type I PLP-dependent aspartate aminotransferase-like (Major domain)"/>
    <property type="match status" value="1"/>
</dbReference>
<dbReference type="HAMAP" id="MF_00375">
    <property type="entry name" value="HemL_aminotrans_3"/>
    <property type="match status" value="1"/>
</dbReference>
<dbReference type="InterPro" id="IPR004639">
    <property type="entry name" value="4pyrrol_synth_GluAld_NH2Trfase"/>
</dbReference>
<dbReference type="InterPro" id="IPR005814">
    <property type="entry name" value="Aminotrans_3"/>
</dbReference>
<dbReference type="InterPro" id="IPR049704">
    <property type="entry name" value="Aminotrans_3_PPA_site"/>
</dbReference>
<dbReference type="InterPro" id="IPR015424">
    <property type="entry name" value="PyrdxlP-dep_Trfase"/>
</dbReference>
<dbReference type="InterPro" id="IPR015421">
    <property type="entry name" value="PyrdxlP-dep_Trfase_major"/>
</dbReference>
<dbReference type="InterPro" id="IPR015422">
    <property type="entry name" value="PyrdxlP-dep_Trfase_small"/>
</dbReference>
<dbReference type="NCBIfam" id="TIGR00713">
    <property type="entry name" value="hemL"/>
    <property type="match status" value="1"/>
</dbReference>
<dbReference type="NCBIfam" id="NF000818">
    <property type="entry name" value="PRK00062.1"/>
    <property type="match status" value="1"/>
</dbReference>
<dbReference type="PANTHER" id="PTHR43713">
    <property type="entry name" value="GLUTAMATE-1-SEMIALDEHYDE 2,1-AMINOMUTASE"/>
    <property type="match status" value="1"/>
</dbReference>
<dbReference type="PANTHER" id="PTHR43713:SF3">
    <property type="entry name" value="GLUTAMATE-1-SEMIALDEHYDE 2,1-AMINOMUTASE 1, CHLOROPLASTIC-RELATED"/>
    <property type="match status" value="1"/>
</dbReference>
<dbReference type="Pfam" id="PF00202">
    <property type="entry name" value="Aminotran_3"/>
    <property type="match status" value="1"/>
</dbReference>
<dbReference type="SUPFAM" id="SSF53383">
    <property type="entry name" value="PLP-dependent transferases"/>
    <property type="match status" value="1"/>
</dbReference>
<dbReference type="PROSITE" id="PS00600">
    <property type="entry name" value="AA_TRANSFER_CLASS_3"/>
    <property type="match status" value="1"/>
</dbReference>
<organism>
    <name type="scientific">Shewanella sp. (strain MR-7)</name>
    <dbReference type="NCBI Taxonomy" id="60481"/>
    <lineage>
        <taxon>Bacteria</taxon>
        <taxon>Pseudomonadati</taxon>
        <taxon>Pseudomonadota</taxon>
        <taxon>Gammaproteobacteria</taxon>
        <taxon>Alteromonadales</taxon>
        <taxon>Shewanellaceae</taxon>
        <taxon>Shewanella</taxon>
    </lineage>
</organism>